<keyword id="KW-1185">Reference proteome</keyword>
<keyword id="KW-0687">Ribonucleoprotein</keyword>
<keyword id="KW-0689">Ribosomal protein</keyword>
<accession>Q83G66</accession>
<evidence type="ECO:0000255" key="1">
    <source>
        <dbReference type="HAMAP-Rule" id="MF_00402"/>
    </source>
</evidence>
<evidence type="ECO:0000305" key="2"/>
<sequence>MHALDALDALSIKADIPDFSPGDTVRVYVNITEGDRSRVQVFQGVVIARRGFGVRQTFTVRKISFQVGVERIFPLHSPSINRIEVVTKGSVRRAKLYYIRKLRGKKAKVKQKREL</sequence>
<feature type="chain" id="PRO_0000163563" description="Large ribosomal subunit protein bL19">
    <location>
        <begin position="1"/>
        <end position="115"/>
    </location>
</feature>
<protein>
    <recommendedName>
        <fullName evidence="1">Large ribosomal subunit protein bL19</fullName>
    </recommendedName>
    <alternativeName>
        <fullName evidence="2">50S ribosomal protein L19</fullName>
    </alternativeName>
</protein>
<reference key="1">
    <citation type="journal article" date="2003" name="Genome Res.">
        <title>Tropheryma whipplei twist: a human pathogenic Actinobacteria with a reduced genome.</title>
        <authorList>
            <person name="Raoult D."/>
            <person name="Ogata H."/>
            <person name="Audic S."/>
            <person name="Robert C."/>
            <person name="Suhre K."/>
            <person name="Drancourt M."/>
            <person name="Claverie J.-M."/>
        </authorList>
    </citation>
    <scope>NUCLEOTIDE SEQUENCE [LARGE SCALE GENOMIC DNA]</scope>
    <source>
        <strain>Twist</strain>
    </source>
</reference>
<proteinExistence type="inferred from homology"/>
<comment type="function">
    <text evidence="1">This protein is located at the 30S-50S ribosomal subunit interface and may play a role in the structure and function of the aminoacyl-tRNA binding site.</text>
</comment>
<comment type="similarity">
    <text evidence="1">Belongs to the bacterial ribosomal protein bL19 family.</text>
</comment>
<organism>
    <name type="scientific">Tropheryma whipplei (strain Twist)</name>
    <name type="common">Whipple's bacillus</name>
    <dbReference type="NCBI Taxonomy" id="203267"/>
    <lineage>
        <taxon>Bacteria</taxon>
        <taxon>Bacillati</taxon>
        <taxon>Actinomycetota</taxon>
        <taxon>Actinomycetes</taxon>
        <taxon>Micrococcales</taxon>
        <taxon>Tropherymataceae</taxon>
        <taxon>Tropheryma</taxon>
    </lineage>
</organism>
<dbReference type="EMBL" id="AE014184">
    <property type="protein sequence ID" value="AAO44554.1"/>
    <property type="molecule type" value="Genomic_DNA"/>
</dbReference>
<dbReference type="RefSeq" id="WP_011096262.1">
    <property type="nucleotide sequence ID" value="NC_004572.3"/>
</dbReference>
<dbReference type="SMR" id="Q83G66"/>
<dbReference type="STRING" id="203267.TWT_457"/>
<dbReference type="GeneID" id="67388084"/>
<dbReference type="KEGG" id="twh:TWT_457"/>
<dbReference type="eggNOG" id="COG0335">
    <property type="taxonomic scope" value="Bacteria"/>
</dbReference>
<dbReference type="HOGENOM" id="CLU_103507_2_2_11"/>
<dbReference type="OrthoDB" id="9803541at2"/>
<dbReference type="Proteomes" id="UP000002200">
    <property type="component" value="Chromosome"/>
</dbReference>
<dbReference type="GO" id="GO:0022625">
    <property type="term" value="C:cytosolic large ribosomal subunit"/>
    <property type="evidence" value="ECO:0007669"/>
    <property type="project" value="TreeGrafter"/>
</dbReference>
<dbReference type="GO" id="GO:0003735">
    <property type="term" value="F:structural constituent of ribosome"/>
    <property type="evidence" value="ECO:0007669"/>
    <property type="project" value="InterPro"/>
</dbReference>
<dbReference type="GO" id="GO:0006412">
    <property type="term" value="P:translation"/>
    <property type="evidence" value="ECO:0007669"/>
    <property type="project" value="UniProtKB-UniRule"/>
</dbReference>
<dbReference type="FunFam" id="2.30.30.790:FF:000001">
    <property type="entry name" value="50S ribosomal protein L19"/>
    <property type="match status" value="1"/>
</dbReference>
<dbReference type="Gene3D" id="2.30.30.790">
    <property type="match status" value="1"/>
</dbReference>
<dbReference type="HAMAP" id="MF_00402">
    <property type="entry name" value="Ribosomal_bL19"/>
    <property type="match status" value="1"/>
</dbReference>
<dbReference type="InterPro" id="IPR001857">
    <property type="entry name" value="Ribosomal_bL19"/>
</dbReference>
<dbReference type="InterPro" id="IPR018257">
    <property type="entry name" value="Ribosomal_bL19_CS"/>
</dbReference>
<dbReference type="InterPro" id="IPR038657">
    <property type="entry name" value="Ribosomal_bL19_sf"/>
</dbReference>
<dbReference type="InterPro" id="IPR008991">
    <property type="entry name" value="Translation_prot_SH3-like_sf"/>
</dbReference>
<dbReference type="NCBIfam" id="TIGR01024">
    <property type="entry name" value="rplS_bact"/>
    <property type="match status" value="1"/>
</dbReference>
<dbReference type="PANTHER" id="PTHR15680:SF9">
    <property type="entry name" value="LARGE RIBOSOMAL SUBUNIT PROTEIN BL19M"/>
    <property type="match status" value="1"/>
</dbReference>
<dbReference type="PANTHER" id="PTHR15680">
    <property type="entry name" value="RIBOSOMAL PROTEIN L19"/>
    <property type="match status" value="1"/>
</dbReference>
<dbReference type="Pfam" id="PF01245">
    <property type="entry name" value="Ribosomal_L19"/>
    <property type="match status" value="1"/>
</dbReference>
<dbReference type="PIRSF" id="PIRSF002191">
    <property type="entry name" value="Ribosomal_L19"/>
    <property type="match status" value="1"/>
</dbReference>
<dbReference type="PRINTS" id="PR00061">
    <property type="entry name" value="RIBOSOMALL19"/>
</dbReference>
<dbReference type="SUPFAM" id="SSF50104">
    <property type="entry name" value="Translation proteins SH3-like domain"/>
    <property type="match status" value="1"/>
</dbReference>
<dbReference type="PROSITE" id="PS01015">
    <property type="entry name" value="RIBOSOMAL_L19"/>
    <property type="match status" value="1"/>
</dbReference>
<gene>
    <name evidence="1" type="primary">rplS</name>
    <name type="ordered locus">TWT_457</name>
</gene>
<name>RL19_TROWT</name>